<comment type="function">
    <text evidence="2">Produces ATP from ADP in the presence of a proton gradient across the membrane. The alpha chain is a regulatory subunit.</text>
</comment>
<comment type="catalytic activity">
    <reaction evidence="2">
        <text>ATP + H2O + 4 H(+)(in) = ADP + phosphate + 5 H(+)(out)</text>
        <dbReference type="Rhea" id="RHEA:57720"/>
        <dbReference type="ChEBI" id="CHEBI:15377"/>
        <dbReference type="ChEBI" id="CHEBI:15378"/>
        <dbReference type="ChEBI" id="CHEBI:30616"/>
        <dbReference type="ChEBI" id="CHEBI:43474"/>
        <dbReference type="ChEBI" id="CHEBI:456216"/>
        <dbReference type="EC" id="7.1.2.2"/>
    </reaction>
</comment>
<comment type="subunit">
    <text evidence="1">F-type ATPases have 2 components, CF(1) - the catalytic core - and CF(0) - the membrane proton channel. CF(1) has five subunits: alpha(3), beta(3), gamma(1), delta(1), epsilon(1). CF(0) has four main subunits: a(1), b(1), b'(1) and c(9-12) (By similarity).</text>
</comment>
<comment type="subcellular location">
    <subcellularLocation>
        <location evidence="2">Cell inner membrane</location>
        <topology evidence="2">Peripheral membrane protein</topology>
    </subcellularLocation>
</comment>
<comment type="similarity">
    <text evidence="2">Belongs to the ATPase alpha/beta chains family.</text>
</comment>
<protein>
    <recommendedName>
        <fullName evidence="2">ATP synthase subunit alpha 2</fullName>
        <ecNumber evidence="2">7.1.2.2</ecNumber>
    </recommendedName>
    <alternativeName>
        <fullName evidence="2">ATP synthase F1 sector subunit alpha 2</fullName>
    </alternativeName>
    <alternativeName>
        <fullName evidence="2">F-ATPase subunit alpha 2</fullName>
    </alternativeName>
</protein>
<reference key="1">
    <citation type="submission" date="2005-10" db="EMBL/GenBank/DDBJ databases">
        <title>Finished sequence of plasmid A of Rhodobacter sphaeroides 2.4.1.</title>
        <authorList>
            <person name="Copeland A."/>
            <person name="Lucas S."/>
            <person name="Lapidus A."/>
            <person name="Barry K."/>
            <person name="Detter J.C."/>
            <person name="Glavina T."/>
            <person name="Hammon N."/>
            <person name="Israni S."/>
            <person name="Pitluck S."/>
            <person name="Richardson P."/>
            <person name="Mackenzie C."/>
            <person name="Choudhary M."/>
            <person name="Larimer F."/>
            <person name="Hauser L.J."/>
            <person name="Land M."/>
            <person name="Donohue T.J."/>
            <person name="Kaplan S."/>
        </authorList>
    </citation>
    <scope>NUCLEOTIDE SEQUENCE [LARGE SCALE GENOMIC DNA]</scope>
    <source>
        <strain>ATCC 17023 / DSM 158 / JCM 6121 / CCUG 31486 / LMG 2827 / NBRC 12203 / NCIMB 8253 / ATH 2.4.1.</strain>
    </source>
</reference>
<feature type="chain" id="PRO_0000339050" description="ATP synthase subunit alpha 2">
    <location>
        <begin position="1"/>
        <end position="497"/>
    </location>
</feature>
<feature type="binding site" evidence="2">
    <location>
        <begin position="167"/>
        <end position="174"/>
    </location>
    <ligand>
        <name>ATP</name>
        <dbReference type="ChEBI" id="CHEBI:30616"/>
    </ligand>
</feature>
<feature type="site" description="Required for activity" evidence="2">
    <location>
        <position position="360"/>
    </location>
</feature>
<name>ATPA2_CERS4</name>
<proteinExistence type="inferred from homology"/>
<keyword id="KW-0066">ATP synthesis</keyword>
<keyword id="KW-0067">ATP-binding</keyword>
<keyword id="KW-0997">Cell inner membrane</keyword>
<keyword id="KW-1003">Cell membrane</keyword>
<keyword id="KW-0139">CF(1)</keyword>
<keyword id="KW-0375">Hydrogen ion transport</keyword>
<keyword id="KW-0406">Ion transport</keyword>
<keyword id="KW-0472">Membrane</keyword>
<keyword id="KW-0547">Nucleotide-binding</keyword>
<keyword id="KW-0614">Plasmid</keyword>
<keyword id="KW-1185">Reference proteome</keyword>
<keyword id="KW-1278">Translocase</keyword>
<keyword id="KW-0813">Transport</keyword>
<evidence type="ECO:0000250" key="1"/>
<evidence type="ECO:0000255" key="2">
    <source>
        <dbReference type="HAMAP-Rule" id="MF_01346"/>
    </source>
</evidence>
<organism>
    <name type="scientific">Cereibacter sphaeroides (strain ATCC 17023 / DSM 158 / JCM 6121 / CCUG 31486 / LMG 2827 / NBRC 12203 / NCIMB 8253 / ATH 2.4.1.)</name>
    <name type="common">Rhodobacter sphaeroides</name>
    <dbReference type="NCBI Taxonomy" id="272943"/>
    <lineage>
        <taxon>Bacteria</taxon>
        <taxon>Pseudomonadati</taxon>
        <taxon>Pseudomonadota</taxon>
        <taxon>Alphaproteobacteria</taxon>
        <taxon>Rhodobacterales</taxon>
        <taxon>Paracoccaceae</taxon>
        <taxon>Cereibacter</taxon>
    </lineage>
</organism>
<gene>
    <name evidence="2" type="primary">atpA2</name>
    <name type="ordered locus">RSP_3935</name>
</gene>
<dbReference type="EC" id="7.1.2.2" evidence="2"/>
<dbReference type="EMBL" id="DQ232586">
    <property type="protein sequence ID" value="ABA81765.1"/>
    <property type="molecule type" value="Genomic_DNA"/>
</dbReference>
<dbReference type="RefSeq" id="WP_011836232.1">
    <property type="nucleotide sequence ID" value="NC_009007.1"/>
</dbReference>
<dbReference type="RefSeq" id="YP_001033870.1">
    <property type="nucleotide sequence ID" value="NC_009007.1"/>
</dbReference>
<dbReference type="SMR" id="Q3HKH9"/>
<dbReference type="EnsemblBacteria" id="ABA81765">
    <property type="protein sequence ID" value="ABA81765"/>
    <property type="gene ID" value="RSP_3935"/>
</dbReference>
<dbReference type="GeneID" id="4796476"/>
<dbReference type="KEGG" id="rsp:RSP_3935"/>
<dbReference type="PATRIC" id="fig|272943.9.peg.4341"/>
<dbReference type="OrthoDB" id="9803053at2"/>
<dbReference type="PhylomeDB" id="Q3HKH9"/>
<dbReference type="Proteomes" id="UP000002703">
    <property type="component" value="Plasmid A"/>
</dbReference>
<dbReference type="GO" id="GO:0005886">
    <property type="term" value="C:plasma membrane"/>
    <property type="evidence" value="ECO:0007669"/>
    <property type="project" value="UniProtKB-SubCell"/>
</dbReference>
<dbReference type="GO" id="GO:0045259">
    <property type="term" value="C:proton-transporting ATP synthase complex"/>
    <property type="evidence" value="ECO:0007669"/>
    <property type="project" value="UniProtKB-KW"/>
</dbReference>
<dbReference type="GO" id="GO:0043531">
    <property type="term" value="F:ADP binding"/>
    <property type="evidence" value="ECO:0007669"/>
    <property type="project" value="TreeGrafter"/>
</dbReference>
<dbReference type="GO" id="GO:0005524">
    <property type="term" value="F:ATP binding"/>
    <property type="evidence" value="ECO:0007669"/>
    <property type="project" value="UniProtKB-UniRule"/>
</dbReference>
<dbReference type="GO" id="GO:0046933">
    <property type="term" value="F:proton-transporting ATP synthase activity, rotational mechanism"/>
    <property type="evidence" value="ECO:0007669"/>
    <property type="project" value="UniProtKB-UniRule"/>
</dbReference>
<dbReference type="CDD" id="cd18113">
    <property type="entry name" value="ATP-synt_F1_alpha_C"/>
    <property type="match status" value="1"/>
</dbReference>
<dbReference type="CDD" id="cd01132">
    <property type="entry name" value="F1-ATPase_alpha_CD"/>
    <property type="match status" value="1"/>
</dbReference>
<dbReference type="FunFam" id="3.40.50.300:FF:004039">
    <property type="entry name" value="ATP synthase subunit alpha, mitochondrial"/>
    <property type="match status" value="1"/>
</dbReference>
<dbReference type="Gene3D" id="2.40.30.20">
    <property type="match status" value="1"/>
</dbReference>
<dbReference type="Gene3D" id="1.20.150.20">
    <property type="entry name" value="ATP synthase alpha/beta chain, C-terminal domain"/>
    <property type="match status" value="1"/>
</dbReference>
<dbReference type="Gene3D" id="3.40.50.300">
    <property type="entry name" value="P-loop containing nucleotide triphosphate hydrolases"/>
    <property type="match status" value="1"/>
</dbReference>
<dbReference type="HAMAP" id="MF_01346">
    <property type="entry name" value="ATP_synth_alpha_bact"/>
    <property type="match status" value="1"/>
</dbReference>
<dbReference type="InterPro" id="IPR023366">
    <property type="entry name" value="ATP_synth_asu-like_sf"/>
</dbReference>
<dbReference type="InterPro" id="IPR000793">
    <property type="entry name" value="ATP_synth_asu_C"/>
</dbReference>
<dbReference type="InterPro" id="IPR038376">
    <property type="entry name" value="ATP_synth_asu_C_sf"/>
</dbReference>
<dbReference type="InterPro" id="IPR033732">
    <property type="entry name" value="ATP_synth_F1_a_nt-bd_dom"/>
</dbReference>
<dbReference type="InterPro" id="IPR005294">
    <property type="entry name" value="ATP_synth_F1_asu"/>
</dbReference>
<dbReference type="InterPro" id="IPR020003">
    <property type="entry name" value="ATPase_a/bsu_AS"/>
</dbReference>
<dbReference type="InterPro" id="IPR036121">
    <property type="entry name" value="ATPase_F1/V1/A1_a/bsu_N_sf"/>
</dbReference>
<dbReference type="InterPro" id="IPR000194">
    <property type="entry name" value="ATPase_F1/V1/A1_a/bsu_nucl-bd"/>
</dbReference>
<dbReference type="InterPro" id="IPR027417">
    <property type="entry name" value="P-loop_NTPase"/>
</dbReference>
<dbReference type="NCBIfam" id="TIGR00962">
    <property type="entry name" value="atpA"/>
    <property type="match status" value="1"/>
</dbReference>
<dbReference type="NCBIfam" id="NF009884">
    <property type="entry name" value="PRK13343.1"/>
    <property type="match status" value="1"/>
</dbReference>
<dbReference type="PANTHER" id="PTHR48082">
    <property type="entry name" value="ATP SYNTHASE SUBUNIT ALPHA, MITOCHONDRIAL"/>
    <property type="match status" value="1"/>
</dbReference>
<dbReference type="PANTHER" id="PTHR48082:SF2">
    <property type="entry name" value="ATP SYNTHASE SUBUNIT ALPHA, MITOCHONDRIAL"/>
    <property type="match status" value="1"/>
</dbReference>
<dbReference type="Pfam" id="PF00006">
    <property type="entry name" value="ATP-synt_ab"/>
    <property type="match status" value="1"/>
</dbReference>
<dbReference type="Pfam" id="PF00306">
    <property type="entry name" value="ATP-synt_ab_C"/>
    <property type="match status" value="1"/>
</dbReference>
<dbReference type="SUPFAM" id="SSF47917">
    <property type="entry name" value="C-terminal domain of alpha and beta subunits of F1 ATP synthase"/>
    <property type="match status" value="1"/>
</dbReference>
<dbReference type="SUPFAM" id="SSF50615">
    <property type="entry name" value="N-terminal domain of alpha and beta subunits of F1 ATP synthase"/>
    <property type="match status" value="1"/>
</dbReference>
<dbReference type="SUPFAM" id="SSF52540">
    <property type="entry name" value="P-loop containing nucleoside triphosphate hydrolases"/>
    <property type="match status" value="1"/>
</dbReference>
<dbReference type="PROSITE" id="PS00152">
    <property type="entry name" value="ATPASE_ALPHA_BETA"/>
    <property type="match status" value="1"/>
</dbReference>
<geneLocation type="plasmid">
    <name>pRS241a</name>
</geneLocation>
<sequence length="497" mass="52011">MSGDPGLEALKARVAEVPLGPEIEETGRIATLADGLVEVEGLPGARLGEVVRFAGGAEGLVLTLDPETVQVALLDPGAALGSGTEVRRTGQLLSVPVGQGLLGRVVDPLGRPLDGLPAILPEARLEIERPAPGIVDRDMVAEPVETGLLVVDALFAVGRGQRELIIGERATGKTSLAVDAIVNQAASDIVCFYVAIGQRTTAVRRVIETVREKGAFARTVFVVAPATASPGLRWIAPFAATSMAEWVRDRGGHALIVYDDLTKHAAVHRELALLARQPPGREAYPGDIFYLHARLLERSAKLSAVNGGGSLTALPIAEIEAGNLSAYIPTNLISIADGQIVTSAALFAANQRPAVDIGLSVSRVGGKAQRGALKAVAGRVRLDYAQYLEMKMFSRFGGFGDAALRARLARGERIGALLAQPRTTPLSTPVQVALLAALAEGALDDVPLEDLARLKAALGPVLAADASLGPFRAAPDRLEPETRAALLACVRRAREAP</sequence>
<accession>Q3HKH9</accession>